<gene>
    <name evidence="1" type="primary">rlmH</name>
    <name type="ordered locus">Hore_20240</name>
</gene>
<protein>
    <recommendedName>
        <fullName evidence="1">Ribosomal RNA large subunit methyltransferase H</fullName>
        <ecNumber evidence="1">2.1.1.177</ecNumber>
    </recommendedName>
    <alternativeName>
        <fullName evidence="1">23S rRNA (pseudouridine1915-N3)-methyltransferase</fullName>
    </alternativeName>
    <alternativeName>
        <fullName evidence="1">23S rRNA m3Psi1915 methyltransferase</fullName>
    </alternativeName>
    <alternativeName>
        <fullName evidence="1">rRNA (pseudouridine-N3-)-methyltransferase RlmH</fullName>
    </alternativeName>
</protein>
<keyword id="KW-0963">Cytoplasm</keyword>
<keyword id="KW-0489">Methyltransferase</keyword>
<keyword id="KW-1185">Reference proteome</keyword>
<keyword id="KW-0698">rRNA processing</keyword>
<keyword id="KW-0949">S-adenosyl-L-methionine</keyword>
<keyword id="KW-0808">Transferase</keyword>
<name>RLMH_HALOH</name>
<evidence type="ECO:0000255" key="1">
    <source>
        <dbReference type="HAMAP-Rule" id="MF_00658"/>
    </source>
</evidence>
<accession>B8CZR7</accession>
<feature type="chain" id="PRO_1000199820" description="Ribosomal RNA large subunit methyltransferase H">
    <location>
        <begin position="1"/>
        <end position="159"/>
    </location>
</feature>
<feature type="binding site" evidence="1">
    <location>
        <position position="76"/>
    </location>
    <ligand>
        <name>S-adenosyl-L-methionine</name>
        <dbReference type="ChEBI" id="CHEBI:59789"/>
    </ligand>
</feature>
<feature type="binding site" evidence="1">
    <location>
        <position position="108"/>
    </location>
    <ligand>
        <name>S-adenosyl-L-methionine</name>
        <dbReference type="ChEBI" id="CHEBI:59789"/>
    </ligand>
</feature>
<feature type="binding site" evidence="1">
    <location>
        <begin position="127"/>
        <end position="132"/>
    </location>
    <ligand>
        <name>S-adenosyl-L-methionine</name>
        <dbReference type="ChEBI" id="CHEBI:59789"/>
    </ligand>
</feature>
<reference key="1">
    <citation type="journal article" date="2009" name="PLoS ONE">
        <title>Genome analysis of the anaerobic thermohalophilic bacterium Halothermothrix orenii.</title>
        <authorList>
            <person name="Mavromatis K."/>
            <person name="Ivanova N."/>
            <person name="Anderson I."/>
            <person name="Lykidis A."/>
            <person name="Hooper S.D."/>
            <person name="Sun H."/>
            <person name="Kunin V."/>
            <person name="Lapidus A."/>
            <person name="Hugenholtz P."/>
            <person name="Patel B."/>
            <person name="Kyrpides N.C."/>
        </authorList>
    </citation>
    <scope>NUCLEOTIDE SEQUENCE [LARGE SCALE GENOMIC DNA]</scope>
    <source>
        <strain>H 168 / OCM 544 / DSM 9562</strain>
    </source>
</reference>
<sequence>MKINIMAVGKIKEDYINAGIKEFLKRLKPYTEVNVIEVDDERIPPNASGAQIEKVKEKEGERLLKNVPKNSYVIVLDVKGKPMTSEGLAKSIQNLQLQGYSNITFIIGGALGLSQKVLDTGDYILSFSHMTFTHQMIRLILLEQLYRAFKIIKGEPYHK</sequence>
<dbReference type="EC" id="2.1.1.177" evidence="1"/>
<dbReference type="EMBL" id="CP001098">
    <property type="protein sequence ID" value="ACL70769.1"/>
    <property type="molecule type" value="Genomic_DNA"/>
</dbReference>
<dbReference type="RefSeq" id="WP_015923738.1">
    <property type="nucleotide sequence ID" value="NC_011899.1"/>
</dbReference>
<dbReference type="SMR" id="B8CZR7"/>
<dbReference type="STRING" id="373903.Hore_20240"/>
<dbReference type="KEGG" id="hor:Hore_20240"/>
<dbReference type="eggNOG" id="COG1576">
    <property type="taxonomic scope" value="Bacteria"/>
</dbReference>
<dbReference type="HOGENOM" id="CLU_100552_0_0_9"/>
<dbReference type="OrthoDB" id="9806643at2"/>
<dbReference type="Proteomes" id="UP000000719">
    <property type="component" value="Chromosome"/>
</dbReference>
<dbReference type="GO" id="GO:0005737">
    <property type="term" value="C:cytoplasm"/>
    <property type="evidence" value="ECO:0007669"/>
    <property type="project" value="UniProtKB-SubCell"/>
</dbReference>
<dbReference type="GO" id="GO:0070038">
    <property type="term" value="F:rRNA (pseudouridine-N3-)-methyltransferase activity"/>
    <property type="evidence" value="ECO:0007669"/>
    <property type="project" value="UniProtKB-UniRule"/>
</dbReference>
<dbReference type="CDD" id="cd18081">
    <property type="entry name" value="RlmH-like"/>
    <property type="match status" value="1"/>
</dbReference>
<dbReference type="Gene3D" id="3.40.1280.10">
    <property type="match status" value="1"/>
</dbReference>
<dbReference type="HAMAP" id="MF_00658">
    <property type="entry name" value="23SrRNA_methyltr_H"/>
    <property type="match status" value="1"/>
</dbReference>
<dbReference type="InterPro" id="IPR029028">
    <property type="entry name" value="Alpha/beta_knot_MTases"/>
</dbReference>
<dbReference type="InterPro" id="IPR003742">
    <property type="entry name" value="RlmH-like"/>
</dbReference>
<dbReference type="InterPro" id="IPR029026">
    <property type="entry name" value="tRNA_m1G_MTases_N"/>
</dbReference>
<dbReference type="NCBIfam" id="NF000985">
    <property type="entry name" value="PRK00103.1-3"/>
    <property type="match status" value="1"/>
</dbReference>
<dbReference type="NCBIfam" id="NF000986">
    <property type="entry name" value="PRK00103.1-4"/>
    <property type="match status" value="1"/>
</dbReference>
<dbReference type="NCBIfam" id="TIGR00246">
    <property type="entry name" value="tRNA_RlmH_YbeA"/>
    <property type="match status" value="1"/>
</dbReference>
<dbReference type="PANTHER" id="PTHR33603">
    <property type="entry name" value="METHYLTRANSFERASE"/>
    <property type="match status" value="1"/>
</dbReference>
<dbReference type="PANTHER" id="PTHR33603:SF1">
    <property type="entry name" value="RIBOSOMAL RNA LARGE SUBUNIT METHYLTRANSFERASE H"/>
    <property type="match status" value="1"/>
</dbReference>
<dbReference type="Pfam" id="PF02590">
    <property type="entry name" value="SPOUT_MTase"/>
    <property type="match status" value="1"/>
</dbReference>
<dbReference type="PIRSF" id="PIRSF004505">
    <property type="entry name" value="MT_bac"/>
    <property type="match status" value="1"/>
</dbReference>
<dbReference type="SUPFAM" id="SSF75217">
    <property type="entry name" value="alpha/beta knot"/>
    <property type="match status" value="1"/>
</dbReference>
<organism>
    <name type="scientific">Halothermothrix orenii (strain H 168 / OCM 544 / DSM 9562)</name>
    <dbReference type="NCBI Taxonomy" id="373903"/>
    <lineage>
        <taxon>Bacteria</taxon>
        <taxon>Bacillati</taxon>
        <taxon>Bacillota</taxon>
        <taxon>Clostridia</taxon>
        <taxon>Halanaerobiales</taxon>
        <taxon>Halothermotrichaceae</taxon>
        <taxon>Halothermothrix</taxon>
    </lineage>
</organism>
<proteinExistence type="inferred from homology"/>
<comment type="function">
    <text evidence="1">Specifically methylates the pseudouridine at position 1915 (m3Psi1915) in 23S rRNA.</text>
</comment>
<comment type="catalytic activity">
    <reaction evidence="1">
        <text>pseudouridine(1915) in 23S rRNA + S-adenosyl-L-methionine = N(3)-methylpseudouridine(1915) in 23S rRNA + S-adenosyl-L-homocysteine + H(+)</text>
        <dbReference type="Rhea" id="RHEA:42752"/>
        <dbReference type="Rhea" id="RHEA-COMP:10221"/>
        <dbReference type="Rhea" id="RHEA-COMP:10222"/>
        <dbReference type="ChEBI" id="CHEBI:15378"/>
        <dbReference type="ChEBI" id="CHEBI:57856"/>
        <dbReference type="ChEBI" id="CHEBI:59789"/>
        <dbReference type="ChEBI" id="CHEBI:65314"/>
        <dbReference type="ChEBI" id="CHEBI:74486"/>
        <dbReference type="EC" id="2.1.1.177"/>
    </reaction>
</comment>
<comment type="subunit">
    <text evidence="1">Homodimer.</text>
</comment>
<comment type="subcellular location">
    <subcellularLocation>
        <location evidence="1">Cytoplasm</location>
    </subcellularLocation>
</comment>
<comment type="similarity">
    <text evidence="1">Belongs to the RNA methyltransferase RlmH family.</text>
</comment>